<sequence length="256" mass="27384">MNNDVFPNKFKAALAAKQVQIGCWSALSNPISTEVLGLAGFDWLVLDGEHAPNDISTFIPQLMALKGSASAPVVRVPTNEPVIIKRLLDIGFYNFLIPFVETKEEAELAVASTRYPPEGIRGVSVSHRANMFGTVADYFAQSNKNITILVQIESQQGVDNVDAIAATEGVDGIFVGPSDLAAALGHLGNASHPDVQKAIQHIFNRASAHGKPSGILAPVEADARRYLEWGATFVAVGSDLGVFRSATQKLADTFKK</sequence>
<proteinExistence type="evidence at protein level"/>
<evidence type="ECO:0000250" key="1"/>
<evidence type="ECO:0000269" key="2">
    <source>
    </source>
</evidence>
<evidence type="ECO:0000269" key="3">
    <source>
    </source>
</evidence>
<evidence type="ECO:0000269" key="4">
    <source>
    </source>
</evidence>
<evidence type="ECO:0000269" key="5">
    <source ref="5"/>
</evidence>
<evidence type="ECO:0000269" key="6">
    <source ref="7"/>
</evidence>
<evidence type="ECO:0000303" key="7">
    <source>
    </source>
</evidence>
<evidence type="ECO:0000303" key="8">
    <source>
    </source>
</evidence>
<evidence type="ECO:0000303" key="9">
    <source ref="5"/>
</evidence>
<evidence type="ECO:0000305" key="10"/>
<evidence type="ECO:0000305" key="11">
    <source>
    </source>
</evidence>
<evidence type="ECO:0007829" key="12">
    <source>
        <dbReference type="PDB" id="1DXE"/>
    </source>
</evidence>
<name>GARL_ECOLI</name>
<gene>
    <name evidence="7" type="primary">garL</name>
    <name type="synonym">yhaF</name>
    <name type="ordered locus">b3126</name>
    <name type="ordered locus">JW3095</name>
</gene>
<organism>
    <name type="scientific">Escherichia coli (strain K12)</name>
    <dbReference type="NCBI Taxonomy" id="83333"/>
    <lineage>
        <taxon>Bacteria</taxon>
        <taxon>Pseudomonadati</taxon>
        <taxon>Pseudomonadota</taxon>
        <taxon>Gammaproteobacteria</taxon>
        <taxon>Enterobacterales</taxon>
        <taxon>Enterobacteriaceae</taxon>
        <taxon>Escherichia</taxon>
    </lineage>
</organism>
<reference key="1">
    <citation type="journal article" date="1997" name="Science">
        <title>The complete genome sequence of Escherichia coli K-12.</title>
        <authorList>
            <person name="Blattner F.R."/>
            <person name="Plunkett G. III"/>
            <person name="Bloch C.A."/>
            <person name="Perna N.T."/>
            <person name="Burland V."/>
            <person name="Riley M."/>
            <person name="Collado-Vides J."/>
            <person name="Glasner J.D."/>
            <person name="Rode C.K."/>
            <person name="Mayhew G.F."/>
            <person name="Gregor J."/>
            <person name="Davis N.W."/>
            <person name="Kirkpatrick H.A."/>
            <person name="Goeden M.A."/>
            <person name="Rose D.J."/>
            <person name="Mau B."/>
            <person name="Shao Y."/>
        </authorList>
    </citation>
    <scope>NUCLEOTIDE SEQUENCE [LARGE SCALE GENOMIC DNA]</scope>
    <source>
        <strain>K12 / MG1655 / ATCC 47076</strain>
    </source>
</reference>
<reference key="2">
    <citation type="journal article" date="2006" name="Mol. Syst. Biol.">
        <title>Highly accurate genome sequences of Escherichia coli K-12 strains MG1655 and W3110.</title>
        <authorList>
            <person name="Hayashi K."/>
            <person name="Morooka N."/>
            <person name="Yamamoto Y."/>
            <person name="Fujita K."/>
            <person name="Isono K."/>
            <person name="Choi S."/>
            <person name="Ohtsubo E."/>
            <person name="Baba T."/>
            <person name="Wanner B.L."/>
            <person name="Mori H."/>
            <person name="Horiuchi T."/>
        </authorList>
    </citation>
    <scope>NUCLEOTIDE SEQUENCE [LARGE SCALE GENOMIC DNA]</scope>
    <source>
        <strain>K12 / W3110 / ATCC 27325 / DSM 5911</strain>
    </source>
</reference>
<reference key="3">
    <citation type="journal article" date="1991" name="J. Bacteriol.">
        <title>Precise mapping of the rnpB gene encoding the RNA component of RNase P in Escherichia coli K-12.</title>
        <authorList>
            <person name="Komine Y."/>
            <person name="Inokuchi H."/>
        </authorList>
    </citation>
    <scope>NUCLEOTIDE SEQUENCE [GENOMIC DNA] OF 89-256</scope>
    <source>
        <strain>K12</strain>
    </source>
</reference>
<reference key="4">
    <citation type="journal article" date="1998" name="Biochemistry">
        <title>Evolution of enzymatic activities in the enolase superfamily: characterization of the (D)-glucarate/galactarate catabolic pathway in Escherichia coli.</title>
        <authorList>
            <person name="Hubbard B.K."/>
            <person name="Koch M."/>
            <person name="Palmer D.R."/>
            <person name="Babbitt P.C."/>
            <person name="Gerlt J.A."/>
        </authorList>
    </citation>
    <scope>PROTEIN SEQUENCE OF 1-16</scope>
    <scope>FUNCTION</scope>
    <scope>CATALYTIC ACTIVITY</scope>
    <scope>KINETIC PARAMETERS</scope>
    <scope>PATHWAY</scope>
    <source>
        <strain>K12 / MG1655 / ATCC 47076</strain>
    </source>
</reference>
<reference key="5">
    <citation type="journal article" date="1966" name="Methods Enzymol.">
        <title>2-keto-3-deoxy-D-glucarate aldolase.</title>
        <authorList>
            <person name="Fish D.C."/>
            <person name="Blumenthal H.J."/>
        </authorList>
    </citation>
    <scope>FUNCTION</scope>
    <scope>CATALYTIC ACTIVITY</scope>
    <scope>SUBSTRATE SPECIFICITY</scope>
    <scope>COFACTOR</scope>
    <scope>ACTIVITY REGULATION</scope>
    <scope>PH DEPENDENCE</scope>
    <source>
        <strain>K12 / CR63</strain>
    </source>
</reference>
<reference key="6">
    <citation type="journal article" date="2000" name="J. Bacteriol.">
        <title>A common regulator for the operons encoding the enzymes involved in D-galactarate, D-glucarate, and D-glycerate utilization in Escherichia coli.</title>
        <authorList>
            <person name="Monterrubio R."/>
            <person name="Baldoma L."/>
            <person name="Obradors N."/>
            <person name="Aguilar J."/>
            <person name="Badia J."/>
        </authorList>
    </citation>
    <scope>GENE NAME</scope>
    <scope>INDUCTION</scope>
</reference>
<reference key="7">
    <citation type="journal article" date="2017" name="Green Chem.">
        <title>Expanding the reaction space of aldolases using hydroxypyruvate as a nucleophilic substrate.</title>
        <authorList>
            <person name="de Berardinis V."/>
            <person name="Guerard-Helaine C."/>
            <person name="Darii E."/>
            <person name="Bastard K."/>
            <person name="Helaine V."/>
            <person name="Mariage A."/>
            <person name="Petit J.-L."/>
            <person name="Poupard N."/>
            <person name="Sanchez-Moreno I."/>
            <person name="Stam M."/>
            <person name="Gefflaut T."/>
            <person name="Salanoubat M."/>
            <person name="Lemaire M."/>
        </authorList>
    </citation>
    <scope>FUNCTION</scope>
    <scope>CATALYTIC ACTIVITY</scope>
</reference>
<reference key="8">
    <citation type="journal article" date="2000" name="EMBO J.">
        <title>Crystal structures of the metal-dependent 2-dehydro-3-deoxy-galactarate aldolase suggest a novel reaction mechanism.</title>
        <authorList>
            <person name="Izard T."/>
            <person name="Blackwell N.C."/>
        </authorList>
    </citation>
    <scope>X-RAY CRYSTALLOGRAPHY (1.8 ANGSTROMS) IN COMPLEXES WITH MAGNESIUM AND PYRUVATE</scope>
    <scope>SUBUNIT</scope>
</reference>
<protein>
    <recommendedName>
        <fullName evidence="8">5-keto-4-deoxy-D-glucarate aldolase</fullName>
        <shortName evidence="8">KDGluc aldolase</shortName>
        <shortName evidence="8">KDGlucA</shortName>
        <ecNumber evidence="4 5">4.1.2.20</ecNumber>
    </recommendedName>
    <alternativeName>
        <fullName>2-dehydro-3-deoxy-D-glucarate aldolase</fullName>
    </alternativeName>
    <alternativeName>
        <fullName evidence="9">2-keto-3-deoxy-D-glucarate aldolase</fullName>
    </alternativeName>
    <alternativeName>
        <fullName>5-dehydro-4-deoxy-D-glucarate aldolase</fullName>
    </alternativeName>
    <alternativeName>
        <fullName>Alpha-keto-beta-deoxy-D-glucarate aldolase</fullName>
    </alternativeName>
</protein>
<accession>P23522</accession>
<accession>Q2M983</accession>
<comment type="function">
    <text evidence="4 5 6">Catalyzes the reversible retro-aldol cleavage of both 5-keto-4-deoxy-D-glucarate and 2-keto-3-deoxy-D-glucarate to pyruvate and tartronic semialdehyde (PubMed:9772162, Ref.5). In vitro, can catalyze the aldolisation reaction between hydroxypyruvate (HPA) or pyruvate (PA) and D-glyceraldehyde (D-GA) (Ref.7). The condensation of hydroxypyruvate and D-glyceraldehyde produces 2-dehydro-D-gluconate as the major product (Ref.7). The condensation of pyruvate and D-glyceraldehyde produces 2-dehydro-3-deoxy-L-galactonate as the major product and 2-dehydro-3-deoxy-D-gluconate (Ref.7).</text>
</comment>
<comment type="catalytic activity">
    <reaction evidence="4 5">
        <text>5-dehydro-4-deoxy-D-glucarate = 2-hydroxy-3-oxopropanoate + pyruvate</text>
        <dbReference type="Rhea" id="RHEA:27726"/>
        <dbReference type="ChEBI" id="CHEBI:15361"/>
        <dbReference type="ChEBI" id="CHEBI:42819"/>
        <dbReference type="ChEBI" id="CHEBI:57978"/>
    </reaction>
</comment>
<comment type="catalytic activity">
    <reaction evidence="4 5">
        <text>2-dehydro-3-deoxy-D-glucarate = 2-hydroxy-3-oxopropanoate + pyruvate</text>
        <dbReference type="Rhea" id="RHEA:10268"/>
        <dbReference type="ChEBI" id="CHEBI:15361"/>
        <dbReference type="ChEBI" id="CHEBI:57978"/>
        <dbReference type="ChEBI" id="CHEBI:58098"/>
        <dbReference type="EC" id="4.1.2.20"/>
    </reaction>
</comment>
<comment type="catalytic activity">
    <reaction evidence="6">
        <text>D-glyceraldehyde + 3-hydroxypyruvate = 2-dehydro-D-gluconate</text>
        <dbReference type="Rhea" id="RHEA:80043"/>
        <dbReference type="ChEBI" id="CHEBI:16808"/>
        <dbReference type="ChEBI" id="CHEBI:17180"/>
        <dbReference type="ChEBI" id="CHEBI:17378"/>
    </reaction>
</comment>
<comment type="catalytic activity">
    <reaction evidence="6">
        <text>D-glyceraldehyde + pyruvate = 2-dehydro-3-deoxy-L-galactonate</text>
        <dbReference type="Rhea" id="RHEA:80055"/>
        <dbReference type="ChEBI" id="CHEBI:15361"/>
        <dbReference type="ChEBI" id="CHEBI:17378"/>
        <dbReference type="ChEBI" id="CHEBI:75545"/>
    </reaction>
</comment>
<comment type="catalytic activity">
    <reaction evidence="6">
        <text>2-dehydro-3-deoxy-D-gluconate = D-glyceraldehyde + pyruvate</text>
        <dbReference type="Rhea" id="RHEA:35583"/>
        <dbReference type="ChEBI" id="CHEBI:15361"/>
        <dbReference type="ChEBI" id="CHEBI:17378"/>
        <dbReference type="ChEBI" id="CHEBI:57990"/>
    </reaction>
</comment>
<comment type="cofactor">
    <cofactor evidence="5">
        <name>Mg(2+)</name>
        <dbReference type="ChEBI" id="CHEBI:18420"/>
    </cofactor>
    <cofactor evidence="5">
        <name>Co(2+)</name>
        <dbReference type="ChEBI" id="CHEBI:48828"/>
    </cofactor>
    <cofactor evidence="5">
        <name>Fe(2+)</name>
        <dbReference type="ChEBI" id="CHEBI:29033"/>
    </cofactor>
    <cofactor evidence="5">
        <name>Mn(2+)</name>
        <dbReference type="ChEBI" id="CHEBI:29035"/>
    </cofactor>
    <text evidence="5">Binds 1 Mg(2+) ion per subunit. Can also use, although less efficiently, Co(2+), Fe(2+) and Mn(2+).</text>
</comment>
<comment type="activity regulation">
    <text evidence="5">Inhibited by acetate, chloride and bromide ions, nitrate, fluoride, cyanide, EDTA and pyrophosphate.</text>
</comment>
<comment type="biophysicochemical properties">
    <kinetics>
        <KM evidence="4">65 uM for 5-keto-4-deoxy-D-glucarate</KM>
    </kinetics>
    <phDependence>
        <text evidence="5">Optimum pH is 7.4-8.6. Stable from pH 6 to 7.5.</text>
    </phDependence>
</comment>
<comment type="pathway">
    <text evidence="4">Carbohydrate acid metabolism; galactarate degradation; D-glycerate from galactarate: step 2/3.</text>
</comment>
<comment type="subunit">
    <text evidence="3">Homohexamer; trimer of dimers.</text>
</comment>
<comment type="induction">
    <text evidence="2">Induced by D-galactarate, D-glucarate and D-glycerate.</text>
</comment>
<comment type="miscellaneous">
    <text evidence="11">The catalytic mechanism was originally thought to use a phosphate as the catalytic acid, but this was subsequently disputed (PubMed:15996099, PubMed:17881002, PubMed:18754683).</text>
</comment>
<comment type="similarity">
    <text evidence="10">Belongs to the HpcH/HpaI aldolase family. KDGluc aldolase subfamily.</text>
</comment>
<comment type="caution">
    <text evidence="10">Was wrongly named 2-dehydro-3-deoxygalactarate aldolase (DDG aldolase or DDGA) in PubMed:10921867. 2-dehydro-3-deoxygalactarate is the enantiomer of 5-dehydro-4-deoxy-D-glucarate, but is not an isomer obtained in the degradation pathway of D-glucarate/galactarate and the enzyme has not been shown to be active on it.</text>
</comment>
<feature type="chain" id="PRO_0000207093" description="5-keto-4-deoxy-D-glucarate aldolase">
    <location>
        <begin position="1"/>
        <end position="256"/>
    </location>
</feature>
<feature type="active site" description="Proton acceptor" evidence="1">
    <location>
        <position position="50"/>
    </location>
</feature>
<feature type="binding site" evidence="3">
    <location>
        <position position="151"/>
    </location>
    <ligand>
        <name>substrate</name>
    </ligand>
</feature>
<feature type="binding site" evidence="3">
    <location>
        <position position="153"/>
    </location>
    <ligand>
        <name>Mg(2+)</name>
        <dbReference type="ChEBI" id="CHEBI:18420"/>
    </ligand>
</feature>
<feature type="binding site" evidence="3">
    <location>
        <position position="178"/>
    </location>
    <ligand>
        <name>substrate</name>
    </ligand>
</feature>
<feature type="binding site" evidence="3">
    <location>
        <position position="179"/>
    </location>
    <ligand>
        <name>Mg(2+)</name>
        <dbReference type="ChEBI" id="CHEBI:18420"/>
    </ligand>
</feature>
<feature type="binding site" evidence="3">
    <location>
        <position position="179"/>
    </location>
    <ligand>
        <name>substrate</name>
    </ligand>
</feature>
<feature type="site" description="Transition state stabilizer" evidence="1">
    <location>
        <position position="75"/>
    </location>
</feature>
<feature type="site" description="Increases basicity of active site His" evidence="1">
    <location>
        <position position="89"/>
    </location>
</feature>
<feature type="helix" evidence="12">
    <location>
        <begin position="9"/>
        <end position="15"/>
    </location>
</feature>
<feature type="strand" evidence="12">
    <location>
        <begin position="20"/>
        <end position="25"/>
    </location>
</feature>
<feature type="helix" evidence="12">
    <location>
        <begin position="30"/>
        <end position="36"/>
    </location>
</feature>
<feature type="strand" evidence="12">
    <location>
        <begin position="42"/>
        <end position="52"/>
    </location>
</feature>
<feature type="helix" evidence="12">
    <location>
        <begin position="55"/>
        <end position="64"/>
    </location>
</feature>
<feature type="turn" evidence="12">
    <location>
        <begin position="65"/>
        <end position="67"/>
    </location>
</feature>
<feature type="strand" evidence="12">
    <location>
        <begin position="69"/>
        <end position="75"/>
    </location>
</feature>
<feature type="strand" evidence="12">
    <location>
        <begin position="77"/>
        <end position="79"/>
    </location>
</feature>
<feature type="helix" evidence="12">
    <location>
        <begin position="81"/>
        <end position="89"/>
    </location>
</feature>
<feature type="strand" evidence="12">
    <location>
        <begin position="94"/>
        <end position="98"/>
    </location>
</feature>
<feature type="helix" evidence="12">
    <location>
        <begin position="103"/>
        <end position="111"/>
    </location>
</feature>
<feature type="turn" evidence="12">
    <location>
        <begin position="116"/>
        <end position="118"/>
    </location>
</feature>
<feature type="strand" evidence="12">
    <location>
        <begin position="125"/>
        <end position="127"/>
    </location>
</feature>
<feature type="helix" evidence="12">
    <location>
        <begin position="128"/>
        <end position="130"/>
    </location>
</feature>
<feature type="turn" evidence="12">
    <location>
        <begin position="131"/>
        <end position="134"/>
    </location>
</feature>
<feature type="helix" evidence="12">
    <location>
        <begin position="138"/>
        <end position="142"/>
    </location>
</feature>
<feature type="strand" evidence="12">
    <location>
        <begin position="147"/>
        <end position="152"/>
    </location>
</feature>
<feature type="helix" evidence="12">
    <location>
        <begin position="155"/>
        <end position="159"/>
    </location>
</feature>
<feature type="helix" evidence="12">
    <location>
        <begin position="161"/>
        <end position="165"/>
    </location>
</feature>
<feature type="strand" evidence="12">
    <location>
        <begin position="172"/>
        <end position="175"/>
    </location>
</feature>
<feature type="helix" evidence="12">
    <location>
        <begin position="177"/>
        <end position="183"/>
    </location>
</feature>
<feature type="helix" evidence="12">
    <location>
        <begin position="193"/>
        <end position="208"/>
    </location>
</feature>
<feature type="strand" evidence="12">
    <location>
        <begin position="213"/>
        <end position="216"/>
    </location>
</feature>
<feature type="helix" evidence="12">
    <location>
        <begin position="220"/>
        <end position="228"/>
    </location>
</feature>
<feature type="strand" evidence="12">
    <location>
        <begin position="233"/>
        <end position="238"/>
    </location>
</feature>
<feature type="helix" evidence="12">
    <location>
        <begin position="239"/>
        <end position="254"/>
    </location>
</feature>
<keyword id="KW-0002">3D-structure</keyword>
<keyword id="KW-0170">Cobalt</keyword>
<keyword id="KW-0903">Direct protein sequencing</keyword>
<keyword id="KW-0408">Iron</keyword>
<keyword id="KW-0456">Lyase</keyword>
<keyword id="KW-0460">Magnesium</keyword>
<keyword id="KW-0464">Manganese</keyword>
<keyword id="KW-0479">Metal-binding</keyword>
<keyword id="KW-1185">Reference proteome</keyword>
<dbReference type="EC" id="4.1.2.20" evidence="4 5"/>
<dbReference type="EMBL" id="U18997">
    <property type="protein sequence ID" value="AAA57929.1"/>
    <property type="molecule type" value="Genomic_DNA"/>
</dbReference>
<dbReference type="EMBL" id="U00096">
    <property type="protein sequence ID" value="AAC76160.1"/>
    <property type="molecule type" value="Genomic_DNA"/>
</dbReference>
<dbReference type="EMBL" id="AP009048">
    <property type="protein sequence ID" value="BAE77173.1"/>
    <property type="molecule type" value="Genomic_DNA"/>
</dbReference>
<dbReference type="EMBL" id="D90212">
    <property type="protein sequence ID" value="BAA14237.1"/>
    <property type="molecule type" value="Genomic_DNA"/>
</dbReference>
<dbReference type="PIR" id="B65102">
    <property type="entry name" value="B65102"/>
</dbReference>
<dbReference type="RefSeq" id="NP_417595.1">
    <property type="nucleotide sequence ID" value="NC_000913.3"/>
</dbReference>
<dbReference type="RefSeq" id="WP_001058209.1">
    <property type="nucleotide sequence ID" value="NZ_LN832404.1"/>
</dbReference>
<dbReference type="PDB" id="1DXE">
    <property type="method" value="X-ray"/>
    <property type="resolution" value="1.80 A"/>
    <property type="chains" value="A/B=1-256"/>
</dbReference>
<dbReference type="PDB" id="1DXF">
    <property type="method" value="X-ray"/>
    <property type="resolution" value="2.60 A"/>
    <property type="chains" value="A/B=1-256"/>
</dbReference>
<dbReference type="PDBsum" id="1DXE"/>
<dbReference type="PDBsum" id="1DXF"/>
<dbReference type="SMR" id="P23522"/>
<dbReference type="BioGRID" id="4259487">
    <property type="interactions" value="13"/>
</dbReference>
<dbReference type="BioGRID" id="851943">
    <property type="interactions" value="1"/>
</dbReference>
<dbReference type="DIP" id="DIP-9740N"/>
<dbReference type="FunCoup" id="P23522">
    <property type="interactions" value="225"/>
</dbReference>
<dbReference type="IntAct" id="P23522">
    <property type="interactions" value="9"/>
</dbReference>
<dbReference type="STRING" id="511145.b3126"/>
<dbReference type="jPOST" id="P23522"/>
<dbReference type="PaxDb" id="511145-b3126"/>
<dbReference type="EnsemblBacteria" id="AAC76160">
    <property type="protein sequence ID" value="AAC76160"/>
    <property type="gene ID" value="b3126"/>
</dbReference>
<dbReference type="GeneID" id="947630"/>
<dbReference type="KEGG" id="ecj:JW3095"/>
<dbReference type="KEGG" id="eco:b3126"/>
<dbReference type="KEGG" id="ecoc:C3026_17040"/>
<dbReference type="PATRIC" id="fig|1411691.4.peg.3606"/>
<dbReference type="EchoBASE" id="EB0016"/>
<dbReference type="eggNOG" id="COG3836">
    <property type="taxonomic scope" value="Bacteria"/>
</dbReference>
<dbReference type="HOGENOM" id="CLU_059964_1_0_6"/>
<dbReference type="InParanoid" id="P23522"/>
<dbReference type="OMA" id="HQVQIGC"/>
<dbReference type="OrthoDB" id="86160at2"/>
<dbReference type="PhylomeDB" id="P23522"/>
<dbReference type="BioCyc" id="EcoCyc:KDGALDOL-MONOMER"/>
<dbReference type="BioCyc" id="MetaCyc:KDGALDOL-MONOMER"/>
<dbReference type="BRENDA" id="4.1.2.20">
    <property type="organism ID" value="2026"/>
</dbReference>
<dbReference type="SABIO-RK" id="P23522"/>
<dbReference type="UniPathway" id="UPA00565">
    <property type="reaction ID" value="UER00630"/>
</dbReference>
<dbReference type="EvolutionaryTrace" id="P23522"/>
<dbReference type="PRO" id="PR:P23522"/>
<dbReference type="Proteomes" id="UP000000625">
    <property type="component" value="Chromosome"/>
</dbReference>
<dbReference type="GO" id="GO:0005737">
    <property type="term" value="C:cytoplasm"/>
    <property type="evidence" value="ECO:0000314"/>
    <property type="project" value="EcoliWiki"/>
</dbReference>
<dbReference type="GO" id="GO:0061677">
    <property type="term" value="F:2-dehydro-3-deoxy-D-gluconate aldolase activity"/>
    <property type="evidence" value="ECO:0007669"/>
    <property type="project" value="RHEA"/>
</dbReference>
<dbReference type="GO" id="GO:0008672">
    <property type="term" value="F:2-dehydro-3-deoxyglucarate aldolase activity"/>
    <property type="evidence" value="ECO:0000314"/>
    <property type="project" value="EcoliWiki"/>
</dbReference>
<dbReference type="GO" id="GO:0016832">
    <property type="term" value="F:aldehyde-lyase activity"/>
    <property type="evidence" value="ECO:0000318"/>
    <property type="project" value="GO_Central"/>
</dbReference>
<dbReference type="GO" id="GO:0016830">
    <property type="term" value="F:carbon-carbon lyase activity"/>
    <property type="evidence" value="ECO:0000314"/>
    <property type="project" value="EcoliWiki"/>
</dbReference>
<dbReference type="GO" id="GO:0000287">
    <property type="term" value="F:magnesium ion binding"/>
    <property type="evidence" value="ECO:0007669"/>
    <property type="project" value="UniProtKB-UniRule"/>
</dbReference>
<dbReference type="GO" id="GO:0042838">
    <property type="term" value="P:D-glucarate catabolic process"/>
    <property type="evidence" value="ECO:0000314"/>
    <property type="project" value="EcoCyc"/>
</dbReference>
<dbReference type="GO" id="GO:0046392">
    <property type="term" value="P:galactarate catabolic process"/>
    <property type="evidence" value="ECO:0000314"/>
    <property type="project" value="EcoCyc"/>
</dbReference>
<dbReference type="GO" id="GO:0019394">
    <property type="term" value="P:glucarate catabolic process"/>
    <property type="evidence" value="ECO:0000314"/>
    <property type="project" value="EcoliWiki"/>
</dbReference>
<dbReference type="FunFam" id="3.20.20.60:FF:000004">
    <property type="entry name" value="5-keto-4-deoxy-D-glucarate aldolase"/>
    <property type="match status" value="1"/>
</dbReference>
<dbReference type="Gene3D" id="3.20.20.60">
    <property type="entry name" value="Phosphoenolpyruvate-binding domains"/>
    <property type="match status" value="1"/>
</dbReference>
<dbReference type="HAMAP" id="MF_01291">
    <property type="entry name" value="KDGluc_aldolase"/>
    <property type="match status" value="1"/>
</dbReference>
<dbReference type="InterPro" id="IPR005000">
    <property type="entry name" value="Aldolase/citrate-lyase_domain"/>
</dbReference>
<dbReference type="InterPro" id="IPR017648">
    <property type="entry name" value="GarL"/>
</dbReference>
<dbReference type="InterPro" id="IPR050251">
    <property type="entry name" value="HpcH-HpaI_aldolase"/>
</dbReference>
<dbReference type="InterPro" id="IPR015813">
    <property type="entry name" value="Pyrv/PenolPyrv_kinase-like_dom"/>
</dbReference>
<dbReference type="InterPro" id="IPR040442">
    <property type="entry name" value="Pyrv_kinase-like_dom_sf"/>
</dbReference>
<dbReference type="NCBIfam" id="TIGR03239">
    <property type="entry name" value="GarL"/>
    <property type="match status" value="1"/>
</dbReference>
<dbReference type="NCBIfam" id="NF007849">
    <property type="entry name" value="PRK10558.1"/>
    <property type="match status" value="1"/>
</dbReference>
<dbReference type="PANTHER" id="PTHR30502">
    <property type="entry name" value="2-KETO-3-DEOXY-L-RHAMNONATE ALDOLASE"/>
    <property type="match status" value="1"/>
</dbReference>
<dbReference type="PANTHER" id="PTHR30502:SF4">
    <property type="entry name" value="5-KETO-4-DEOXY-D-GLUCARATE ALDOLASE"/>
    <property type="match status" value="1"/>
</dbReference>
<dbReference type="Pfam" id="PF03328">
    <property type="entry name" value="HpcH_HpaI"/>
    <property type="match status" value="1"/>
</dbReference>
<dbReference type="SUPFAM" id="SSF51621">
    <property type="entry name" value="Phosphoenolpyruvate/pyruvate domain"/>
    <property type="match status" value="1"/>
</dbReference>